<evidence type="ECO:0000255" key="1">
    <source>
        <dbReference type="HAMAP-Rule" id="MF_01428"/>
    </source>
</evidence>
<name>GLUQ_SALTI</name>
<comment type="function">
    <text evidence="1">Catalyzes the tRNA-independent activation of glutamate in presence of ATP and the subsequent transfer of glutamate onto a tRNA(Asp). Glutamate is transferred on the 2-amino-5-(4,5-dihydroxy-2-cyclopenten-1-yl) moiety of the queuosine in the wobble position of the QUC anticodon.</text>
</comment>
<comment type="cofactor">
    <cofactor evidence="1">
        <name>Zn(2+)</name>
        <dbReference type="ChEBI" id="CHEBI:29105"/>
    </cofactor>
    <text evidence="1">Binds 1 zinc ion per subunit.</text>
</comment>
<comment type="similarity">
    <text evidence="1">Belongs to the class-I aminoacyl-tRNA synthetase family. GluQ subfamily.</text>
</comment>
<accession>Q8Z9C2</accession>
<accession>Q7CBQ9</accession>
<reference key="1">
    <citation type="journal article" date="2001" name="Nature">
        <title>Complete genome sequence of a multiple drug resistant Salmonella enterica serovar Typhi CT18.</title>
        <authorList>
            <person name="Parkhill J."/>
            <person name="Dougan G."/>
            <person name="James K.D."/>
            <person name="Thomson N.R."/>
            <person name="Pickard D."/>
            <person name="Wain J."/>
            <person name="Churcher C.M."/>
            <person name="Mungall K.L."/>
            <person name="Bentley S.D."/>
            <person name="Holden M.T.G."/>
            <person name="Sebaihia M."/>
            <person name="Baker S."/>
            <person name="Basham D."/>
            <person name="Brooks K."/>
            <person name="Chillingworth T."/>
            <person name="Connerton P."/>
            <person name="Cronin A."/>
            <person name="Davis P."/>
            <person name="Davies R.M."/>
            <person name="Dowd L."/>
            <person name="White N."/>
            <person name="Farrar J."/>
            <person name="Feltwell T."/>
            <person name="Hamlin N."/>
            <person name="Haque A."/>
            <person name="Hien T.T."/>
            <person name="Holroyd S."/>
            <person name="Jagels K."/>
            <person name="Krogh A."/>
            <person name="Larsen T.S."/>
            <person name="Leather S."/>
            <person name="Moule S."/>
            <person name="O'Gaora P."/>
            <person name="Parry C."/>
            <person name="Quail M.A."/>
            <person name="Rutherford K.M."/>
            <person name="Simmonds M."/>
            <person name="Skelton J."/>
            <person name="Stevens K."/>
            <person name="Whitehead S."/>
            <person name="Barrell B.G."/>
        </authorList>
    </citation>
    <scope>NUCLEOTIDE SEQUENCE [LARGE SCALE GENOMIC DNA]</scope>
    <source>
        <strain>CT18</strain>
    </source>
</reference>
<reference key="2">
    <citation type="journal article" date="2003" name="J. Bacteriol.">
        <title>Comparative genomics of Salmonella enterica serovar Typhi strains Ty2 and CT18.</title>
        <authorList>
            <person name="Deng W."/>
            <person name="Liou S.-R."/>
            <person name="Plunkett G. III"/>
            <person name="Mayhew G.F."/>
            <person name="Rose D.J."/>
            <person name="Burland V."/>
            <person name="Kodoyianni V."/>
            <person name="Schwartz D.C."/>
            <person name="Blattner F.R."/>
        </authorList>
    </citation>
    <scope>NUCLEOTIDE SEQUENCE [LARGE SCALE GENOMIC DNA]</scope>
    <source>
        <strain>ATCC 700931 / Ty2</strain>
    </source>
</reference>
<protein>
    <recommendedName>
        <fullName evidence="1">Glutamyl-Q tRNA(Asp) synthetase</fullName>
        <shortName evidence="1">Glu-Q-RSs</shortName>
        <ecNumber evidence="1">6.1.1.-</ecNumber>
    </recommendedName>
</protein>
<keyword id="KW-0030">Aminoacyl-tRNA synthetase</keyword>
<keyword id="KW-0067">ATP-binding</keyword>
<keyword id="KW-0436">Ligase</keyword>
<keyword id="KW-0479">Metal-binding</keyword>
<keyword id="KW-0547">Nucleotide-binding</keyword>
<keyword id="KW-0862">Zinc</keyword>
<proteinExistence type="inferred from homology"/>
<organism>
    <name type="scientific">Salmonella typhi</name>
    <dbReference type="NCBI Taxonomy" id="90370"/>
    <lineage>
        <taxon>Bacteria</taxon>
        <taxon>Pseudomonadati</taxon>
        <taxon>Pseudomonadota</taxon>
        <taxon>Gammaproteobacteria</taxon>
        <taxon>Enterobacterales</taxon>
        <taxon>Enterobacteriaceae</taxon>
        <taxon>Salmonella</taxon>
    </lineage>
</organism>
<feature type="chain" id="PRO_0000208324" description="Glutamyl-Q tRNA(Asp) synthetase">
    <location>
        <begin position="1"/>
        <end position="298"/>
    </location>
</feature>
<feature type="short sequence motif" description="'HIGH' region">
    <location>
        <begin position="12"/>
        <end position="22"/>
    </location>
</feature>
<feature type="short sequence motif" description="'KMSKS' region">
    <location>
        <begin position="228"/>
        <end position="232"/>
    </location>
</feature>
<feature type="binding site" evidence="1">
    <location>
        <begin position="9"/>
        <end position="13"/>
    </location>
    <ligand>
        <name>L-glutamate</name>
        <dbReference type="ChEBI" id="CHEBI:29985"/>
    </ligand>
</feature>
<feature type="binding site" evidence="1">
    <location>
        <position position="45"/>
    </location>
    <ligand>
        <name>L-glutamate</name>
        <dbReference type="ChEBI" id="CHEBI:29985"/>
    </ligand>
</feature>
<feature type="binding site" evidence="1">
    <location>
        <position position="101"/>
    </location>
    <ligand>
        <name>Zn(2+)</name>
        <dbReference type="ChEBI" id="CHEBI:29105"/>
    </ligand>
</feature>
<feature type="binding site" evidence="1">
    <location>
        <position position="103"/>
    </location>
    <ligand>
        <name>Zn(2+)</name>
        <dbReference type="ChEBI" id="CHEBI:29105"/>
    </ligand>
</feature>
<feature type="binding site" evidence="1">
    <location>
        <position position="115"/>
    </location>
    <ligand>
        <name>Zn(2+)</name>
        <dbReference type="ChEBI" id="CHEBI:29105"/>
    </ligand>
</feature>
<feature type="binding site" evidence="1">
    <location>
        <position position="119"/>
    </location>
    <ligand>
        <name>Zn(2+)</name>
        <dbReference type="ChEBI" id="CHEBI:29105"/>
    </ligand>
</feature>
<feature type="binding site" evidence="1">
    <location>
        <position position="172"/>
    </location>
    <ligand>
        <name>L-glutamate</name>
        <dbReference type="ChEBI" id="CHEBI:29985"/>
    </ligand>
</feature>
<feature type="binding site" evidence="1">
    <location>
        <position position="190"/>
    </location>
    <ligand>
        <name>L-glutamate</name>
        <dbReference type="ChEBI" id="CHEBI:29985"/>
    </ligand>
</feature>
<feature type="binding site" evidence="1">
    <location>
        <position position="231"/>
    </location>
    <ligand>
        <name>ATP</name>
        <dbReference type="ChEBI" id="CHEBI:30616"/>
    </ligand>
</feature>
<gene>
    <name evidence="1" type="primary">gluQ</name>
    <name type="ordered locus">STY0210</name>
    <name type="ordered locus">t0193</name>
</gene>
<dbReference type="EC" id="6.1.1.-" evidence="1"/>
<dbReference type="EMBL" id="AL513382">
    <property type="protein sequence ID" value="CAD01346.1"/>
    <property type="molecule type" value="Genomic_DNA"/>
</dbReference>
<dbReference type="EMBL" id="AE014613">
    <property type="protein sequence ID" value="AAO67925.1"/>
    <property type="molecule type" value="Genomic_DNA"/>
</dbReference>
<dbReference type="RefSeq" id="NP_454801.1">
    <property type="nucleotide sequence ID" value="NC_003198.1"/>
</dbReference>
<dbReference type="SMR" id="Q8Z9C2"/>
<dbReference type="STRING" id="220341.gene:17584248"/>
<dbReference type="KEGG" id="stt:t0193"/>
<dbReference type="KEGG" id="sty:STY0210"/>
<dbReference type="PATRIC" id="fig|220341.7.peg.213"/>
<dbReference type="eggNOG" id="COG0008">
    <property type="taxonomic scope" value="Bacteria"/>
</dbReference>
<dbReference type="HOGENOM" id="CLU_015768_0_1_6"/>
<dbReference type="OMA" id="WLLRMED"/>
<dbReference type="OrthoDB" id="9807503at2"/>
<dbReference type="Proteomes" id="UP000000541">
    <property type="component" value="Chromosome"/>
</dbReference>
<dbReference type="Proteomes" id="UP000002670">
    <property type="component" value="Chromosome"/>
</dbReference>
<dbReference type="GO" id="GO:0005829">
    <property type="term" value="C:cytosol"/>
    <property type="evidence" value="ECO:0007669"/>
    <property type="project" value="TreeGrafter"/>
</dbReference>
<dbReference type="GO" id="GO:0005524">
    <property type="term" value="F:ATP binding"/>
    <property type="evidence" value="ECO:0007669"/>
    <property type="project" value="UniProtKB-KW"/>
</dbReference>
<dbReference type="GO" id="GO:0004818">
    <property type="term" value="F:glutamate-tRNA ligase activity"/>
    <property type="evidence" value="ECO:0007669"/>
    <property type="project" value="TreeGrafter"/>
</dbReference>
<dbReference type="GO" id="GO:0008270">
    <property type="term" value="F:zinc ion binding"/>
    <property type="evidence" value="ECO:0007669"/>
    <property type="project" value="UniProtKB-UniRule"/>
</dbReference>
<dbReference type="GO" id="GO:0006424">
    <property type="term" value="P:glutamyl-tRNA aminoacylation"/>
    <property type="evidence" value="ECO:0007669"/>
    <property type="project" value="InterPro"/>
</dbReference>
<dbReference type="GO" id="GO:0006400">
    <property type="term" value="P:tRNA modification"/>
    <property type="evidence" value="ECO:0007669"/>
    <property type="project" value="InterPro"/>
</dbReference>
<dbReference type="FunFam" id="3.40.50.620:FF:000093">
    <property type="entry name" value="Glutamyl-Q tRNA(Asp) synthetase"/>
    <property type="match status" value="1"/>
</dbReference>
<dbReference type="Gene3D" id="3.40.50.620">
    <property type="entry name" value="HUPs"/>
    <property type="match status" value="1"/>
</dbReference>
<dbReference type="HAMAP" id="MF_01428">
    <property type="entry name" value="Glu_Q_tRNA_synth"/>
    <property type="match status" value="1"/>
</dbReference>
<dbReference type="InterPro" id="IPR022380">
    <property type="entry name" value="Glu-Q_tRNA(Asp)_Synthase"/>
</dbReference>
<dbReference type="InterPro" id="IPR000924">
    <property type="entry name" value="Glu/Gln-tRNA-synth"/>
</dbReference>
<dbReference type="InterPro" id="IPR020058">
    <property type="entry name" value="Glu/Gln-tRNA-synth_Ib_cat-dom"/>
</dbReference>
<dbReference type="InterPro" id="IPR049940">
    <property type="entry name" value="GluQ/Sye"/>
</dbReference>
<dbReference type="InterPro" id="IPR014729">
    <property type="entry name" value="Rossmann-like_a/b/a_fold"/>
</dbReference>
<dbReference type="NCBIfam" id="NF004312">
    <property type="entry name" value="PRK05710.1-1"/>
    <property type="match status" value="1"/>
</dbReference>
<dbReference type="NCBIfam" id="NF004314">
    <property type="entry name" value="PRK05710.1-3"/>
    <property type="match status" value="1"/>
</dbReference>
<dbReference type="NCBIfam" id="TIGR03838">
    <property type="entry name" value="queuosine_YadB"/>
    <property type="match status" value="1"/>
</dbReference>
<dbReference type="PANTHER" id="PTHR43311">
    <property type="entry name" value="GLUTAMATE--TRNA LIGASE"/>
    <property type="match status" value="1"/>
</dbReference>
<dbReference type="PANTHER" id="PTHR43311:SF1">
    <property type="entry name" value="GLUTAMYL-Q TRNA(ASP) SYNTHETASE"/>
    <property type="match status" value="1"/>
</dbReference>
<dbReference type="Pfam" id="PF00749">
    <property type="entry name" value="tRNA-synt_1c"/>
    <property type="match status" value="1"/>
</dbReference>
<dbReference type="PRINTS" id="PR00987">
    <property type="entry name" value="TRNASYNTHGLU"/>
</dbReference>
<dbReference type="SUPFAM" id="SSF52374">
    <property type="entry name" value="Nucleotidylyl transferase"/>
    <property type="match status" value="1"/>
</dbReference>
<sequence>MTDSHYIGRFAPSPSGELHFGSLIAALGSYLQARAQRGVWRVRIEDIDPPREVPGAAATILRQLEHYGLHWDGEVLWQSQRHEAYREALAWLHEQGLSYYCTCPRSRIQRLGGIYDGHCRTLCHGPENAAVRIKQQHPVMHFHDALRGDIQADPQLASEDFIIHRRDGLFAYNLAVVVDDHFQGVTEIVRGADLIEPTVRQLSLYKQFGWRAPGYVHLPLALNEQGAKLSKQNHAPALATGDPRPVLVQALRFLGQRDVVAWQEMSVEELLRFAVAHWRLTAVPTSANVNPAFSNASR</sequence>